<protein>
    <recommendedName>
        <fullName evidence="1">Isocitrate dehydrogenase kinase/phosphatase</fullName>
        <shortName evidence="1">IDH kinase/phosphatase</shortName>
        <shortName evidence="1">IDHK/P</shortName>
        <ecNumber evidence="1">2.7.11.5</ecNumber>
        <ecNumber evidence="1">3.1.3.-</ecNumber>
    </recommendedName>
</protein>
<gene>
    <name evidence="1" type="primary">aceK</name>
    <name type="ordered locus">XAC3832</name>
</gene>
<proteinExistence type="inferred from homology"/>
<sequence>MNHPSLPPQSERRALAIAQAVYEAFEDYHARFSEITACAKQRFETRDWSGAREDAVARIALYDQYIAECMLRLRAVLLGQAHDRALWMRARDRYAALLSGLIDQELYKTFYNTLTRRYFGTHGVDADIEFIALDIEPTDAITVPVARHTYAVSPGRLTDMLVRVLGDYAFAVPYAHRTRCAAAIAVRLLDDLAHWGEHPVRSVELLETVFYRERRAYLVGRVFGEHRFSPCVIALINDDAGLRAEAVLTRRSDVAQLFSNSRSYFQADLSTVGDAVVFLRSLLTHKPVDELYTMLGRAKQGKTERYRTFFSHFQAHPSEQLVHADGTPGMVMVVFTLPSYPLVFKLIRDRFAYPKTMSRAQVEGKYELVFQLDRIGRLLDAQPYRFLRFPKARFSPALLQELQTSCAMSLSEDGDDVLIALCYVQRRLRPLNLYLREQLPEAAHAAALDYGQAIKDMARNNIFPGDMLLKNFGITRHQRAVFYDYDELCLITECNFRDWPTPATYEEQMAAEPWFHVGPRDVFPERFALFMGLPSSQLEAVKHQHPELFDPRWWRDLQSRLRDDDYPDTPPYAESRRLA</sequence>
<evidence type="ECO:0000255" key="1">
    <source>
        <dbReference type="HAMAP-Rule" id="MF_00747"/>
    </source>
</evidence>
<comment type="function">
    <text evidence="1">Bifunctional enzyme which can phosphorylate or dephosphorylate isocitrate dehydrogenase (IDH) on a specific serine residue. This is a regulatory mechanism which enables bacteria to bypass the Krebs cycle via the glyoxylate shunt in response to the source of carbon. When bacteria are grown on glucose, IDH is fully active and unphosphorylated, but when grown on acetate or ethanol, the activity of IDH declines drastically concomitant with its phosphorylation.</text>
</comment>
<comment type="catalytic activity">
    <reaction evidence="1">
        <text>L-seryl-[isocitrate dehydrogenase] + ATP = O-phospho-L-seryl-[isocitrate dehydrogenase] + ADP + H(+)</text>
        <dbReference type="Rhea" id="RHEA:43540"/>
        <dbReference type="Rhea" id="RHEA-COMP:10605"/>
        <dbReference type="Rhea" id="RHEA-COMP:10606"/>
        <dbReference type="ChEBI" id="CHEBI:15378"/>
        <dbReference type="ChEBI" id="CHEBI:29999"/>
        <dbReference type="ChEBI" id="CHEBI:30616"/>
        <dbReference type="ChEBI" id="CHEBI:83421"/>
        <dbReference type="ChEBI" id="CHEBI:456216"/>
        <dbReference type="EC" id="2.7.11.5"/>
    </reaction>
</comment>
<comment type="subcellular location">
    <subcellularLocation>
        <location evidence="1">Cytoplasm</location>
    </subcellularLocation>
</comment>
<comment type="similarity">
    <text evidence="1">Belongs to the AceK family.</text>
</comment>
<feature type="chain" id="PRO_0000057910" description="Isocitrate dehydrogenase kinase/phosphatase">
    <location>
        <begin position="1"/>
        <end position="579"/>
    </location>
</feature>
<feature type="active site" evidence="1">
    <location>
        <position position="380"/>
    </location>
</feature>
<feature type="binding site" evidence="1">
    <location>
        <begin position="324"/>
        <end position="330"/>
    </location>
    <ligand>
        <name>ATP</name>
        <dbReference type="ChEBI" id="CHEBI:30616"/>
    </ligand>
</feature>
<feature type="binding site" evidence="1">
    <location>
        <position position="345"/>
    </location>
    <ligand>
        <name>ATP</name>
        <dbReference type="ChEBI" id="CHEBI:30616"/>
    </ligand>
</feature>
<accession>Q8PFZ0</accession>
<organism>
    <name type="scientific">Xanthomonas axonopodis pv. citri (strain 306)</name>
    <dbReference type="NCBI Taxonomy" id="190486"/>
    <lineage>
        <taxon>Bacteria</taxon>
        <taxon>Pseudomonadati</taxon>
        <taxon>Pseudomonadota</taxon>
        <taxon>Gammaproteobacteria</taxon>
        <taxon>Lysobacterales</taxon>
        <taxon>Lysobacteraceae</taxon>
        <taxon>Xanthomonas</taxon>
    </lineage>
</organism>
<reference key="1">
    <citation type="journal article" date="2002" name="Nature">
        <title>Comparison of the genomes of two Xanthomonas pathogens with differing host specificities.</title>
        <authorList>
            <person name="da Silva A.C.R."/>
            <person name="Ferro J.A."/>
            <person name="Reinach F.C."/>
            <person name="Farah C.S."/>
            <person name="Furlan L.R."/>
            <person name="Quaggio R.B."/>
            <person name="Monteiro-Vitorello C.B."/>
            <person name="Van Sluys M.A."/>
            <person name="Almeida N.F. Jr."/>
            <person name="Alves L.M.C."/>
            <person name="do Amaral A.M."/>
            <person name="Bertolini M.C."/>
            <person name="Camargo L.E.A."/>
            <person name="Camarotte G."/>
            <person name="Cannavan F."/>
            <person name="Cardozo J."/>
            <person name="Chambergo F."/>
            <person name="Ciapina L.P."/>
            <person name="Cicarelli R.M.B."/>
            <person name="Coutinho L.L."/>
            <person name="Cursino-Santos J.R."/>
            <person name="El-Dorry H."/>
            <person name="Faria J.B."/>
            <person name="Ferreira A.J.S."/>
            <person name="Ferreira R.C.C."/>
            <person name="Ferro M.I.T."/>
            <person name="Formighieri E.F."/>
            <person name="Franco M.C."/>
            <person name="Greggio C.C."/>
            <person name="Gruber A."/>
            <person name="Katsuyama A.M."/>
            <person name="Kishi L.T."/>
            <person name="Leite R.P."/>
            <person name="Lemos E.G.M."/>
            <person name="Lemos M.V.F."/>
            <person name="Locali E.C."/>
            <person name="Machado M.A."/>
            <person name="Madeira A.M.B.N."/>
            <person name="Martinez-Rossi N.M."/>
            <person name="Martins E.C."/>
            <person name="Meidanis J."/>
            <person name="Menck C.F.M."/>
            <person name="Miyaki C.Y."/>
            <person name="Moon D.H."/>
            <person name="Moreira L.M."/>
            <person name="Novo M.T.M."/>
            <person name="Okura V.K."/>
            <person name="Oliveira M.C."/>
            <person name="Oliveira V.R."/>
            <person name="Pereira H.A."/>
            <person name="Rossi A."/>
            <person name="Sena J.A.D."/>
            <person name="Silva C."/>
            <person name="de Souza R.F."/>
            <person name="Spinola L.A.F."/>
            <person name="Takita M.A."/>
            <person name="Tamura R.E."/>
            <person name="Teixeira E.C."/>
            <person name="Tezza R.I.D."/>
            <person name="Trindade dos Santos M."/>
            <person name="Truffi D."/>
            <person name="Tsai S.M."/>
            <person name="White F.F."/>
            <person name="Setubal J.C."/>
            <person name="Kitajima J.P."/>
        </authorList>
    </citation>
    <scope>NUCLEOTIDE SEQUENCE [LARGE SCALE GENOMIC DNA]</scope>
    <source>
        <strain>306</strain>
    </source>
</reference>
<name>ACEK_XANAC</name>
<keyword id="KW-0067">ATP-binding</keyword>
<keyword id="KW-0963">Cytoplasm</keyword>
<keyword id="KW-0329">Glyoxylate bypass</keyword>
<keyword id="KW-0378">Hydrolase</keyword>
<keyword id="KW-0418">Kinase</keyword>
<keyword id="KW-0547">Nucleotide-binding</keyword>
<keyword id="KW-0904">Protein phosphatase</keyword>
<keyword id="KW-0723">Serine/threonine-protein kinase</keyword>
<keyword id="KW-0808">Transferase</keyword>
<keyword id="KW-0816">Tricarboxylic acid cycle</keyword>
<dbReference type="EC" id="2.7.11.5" evidence="1"/>
<dbReference type="EC" id="3.1.3.-" evidence="1"/>
<dbReference type="EMBL" id="AE008923">
    <property type="protein sequence ID" value="AAM38674.1"/>
    <property type="molecule type" value="Genomic_DNA"/>
</dbReference>
<dbReference type="RefSeq" id="WP_003484508.1">
    <property type="nucleotide sequence ID" value="NC_003919.1"/>
</dbReference>
<dbReference type="SMR" id="Q8PFZ0"/>
<dbReference type="GeneID" id="66912853"/>
<dbReference type="KEGG" id="xac:XAC3832"/>
<dbReference type="eggNOG" id="COG4579">
    <property type="taxonomic scope" value="Bacteria"/>
</dbReference>
<dbReference type="HOGENOM" id="CLU_033804_1_1_6"/>
<dbReference type="Proteomes" id="UP000000576">
    <property type="component" value="Chromosome"/>
</dbReference>
<dbReference type="GO" id="GO:0005737">
    <property type="term" value="C:cytoplasm"/>
    <property type="evidence" value="ECO:0007669"/>
    <property type="project" value="UniProtKB-SubCell"/>
</dbReference>
<dbReference type="GO" id="GO:0008772">
    <property type="term" value="F:[isocitrate dehydrogenase (NADP+)] kinase activity"/>
    <property type="evidence" value="ECO:0007669"/>
    <property type="project" value="UniProtKB-UniRule"/>
</dbReference>
<dbReference type="GO" id="GO:0016208">
    <property type="term" value="F:AMP binding"/>
    <property type="evidence" value="ECO:0007669"/>
    <property type="project" value="TreeGrafter"/>
</dbReference>
<dbReference type="GO" id="GO:0005524">
    <property type="term" value="F:ATP binding"/>
    <property type="evidence" value="ECO:0007669"/>
    <property type="project" value="UniProtKB-UniRule"/>
</dbReference>
<dbReference type="GO" id="GO:0004721">
    <property type="term" value="F:phosphoprotein phosphatase activity"/>
    <property type="evidence" value="ECO:0007669"/>
    <property type="project" value="UniProtKB-KW"/>
</dbReference>
<dbReference type="GO" id="GO:0004674">
    <property type="term" value="F:protein serine/threonine kinase activity"/>
    <property type="evidence" value="ECO:0007669"/>
    <property type="project" value="UniProtKB-KW"/>
</dbReference>
<dbReference type="GO" id="GO:0006006">
    <property type="term" value="P:glucose metabolic process"/>
    <property type="evidence" value="ECO:0007669"/>
    <property type="project" value="InterPro"/>
</dbReference>
<dbReference type="GO" id="GO:0006097">
    <property type="term" value="P:glyoxylate cycle"/>
    <property type="evidence" value="ECO:0007669"/>
    <property type="project" value="UniProtKB-UniRule"/>
</dbReference>
<dbReference type="GO" id="GO:0006099">
    <property type="term" value="P:tricarboxylic acid cycle"/>
    <property type="evidence" value="ECO:0007669"/>
    <property type="project" value="UniProtKB-UniRule"/>
</dbReference>
<dbReference type="HAMAP" id="MF_00747">
    <property type="entry name" value="AceK"/>
    <property type="match status" value="1"/>
</dbReference>
<dbReference type="InterPro" id="IPR046855">
    <property type="entry name" value="AceK_kinase"/>
</dbReference>
<dbReference type="InterPro" id="IPR046854">
    <property type="entry name" value="AceK_regulatory"/>
</dbReference>
<dbReference type="InterPro" id="IPR010452">
    <property type="entry name" value="Isocitrate_DH_AceK"/>
</dbReference>
<dbReference type="NCBIfam" id="NF002804">
    <property type="entry name" value="PRK02946.1"/>
    <property type="match status" value="1"/>
</dbReference>
<dbReference type="PANTHER" id="PTHR39559">
    <property type="match status" value="1"/>
</dbReference>
<dbReference type="PANTHER" id="PTHR39559:SF1">
    <property type="entry name" value="ISOCITRATE DEHYDROGENASE KINASE_PHOSPHATASE"/>
    <property type="match status" value="1"/>
</dbReference>
<dbReference type="Pfam" id="PF06315">
    <property type="entry name" value="AceK_kinase"/>
    <property type="match status" value="1"/>
</dbReference>
<dbReference type="Pfam" id="PF20423">
    <property type="entry name" value="AceK_regulatory"/>
    <property type="match status" value="1"/>
</dbReference>
<dbReference type="PIRSF" id="PIRSF000719">
    <property type="entry name" value="AceK"/>
    <property type="match status" value="1"/>
</dbReference>